<gene>
    <name evidence="1" type="primary">lpxH</name>
    <name type="ordered locus">Smlt0971</name>
</gene>
<dbReference type="EC" id="3.6.1.54" evidence="1"/>
<dbReference type="EMBL" id="AM743169">
    <property type="protein sequence ID" value="CAQ44535.1"/>
    <property type="molecule type" value="Genomic_DNA"/>
</dbReference>
<dbReference type="RefSeq" id="WP_012479257.1">
    <property type="nucleotide sequence ID" value="NC_010943.1"/>
</dbReference>
<dbReference type="SMR" id="B2FQP4"/>
<dbReference type="EnsemblBacteria" id="CAQ44535">
    <property type="protein sequence ID" value="CAQ44535"/>
    <property type="gene ID" value="Smlt0971"/>
</dbReference>
<dbReference type="GeneID" id="93831996"/>
<dbReference type="KEGG" id="sml:Smlt0971"/>
<dbReference type="eggNOG" id="COG2908">
    <property type="taxonomic scope" value="Bacteria"/>
</dbReference>
<dbReference type="HOGENOM" id="CLU_074586_0_0_6"/>
<dbReference type="UniPathway" id="UPA00359">
    <property type="reaction ID" value="UER00480"/>
</dbReference>
<dbReference type="Proteomes" id="UP000008840">
    <property type="component" value="Chromosome"/>
</dbReference>
<dbReference type="GO" id="GO:0005737">
    <property type="term" value="C:cytoplasm"/>
    <property type="evidence" value="ECO:0007669"/>
    <property type="project" value="InterPro"/>
</dbReference>
<dbReference type="GO" id="GO:0019897">
    <property type="term" value="C:extrinsic component of plasma membrane"/>
    <property type="evidence" value="ECO:0007669"/>
    <property type="project" value="UniProtKB-UniRule"/>
</dbReference>
<dbReference type="GO" id="GO:0030145">
    <property type="term" value="F:manganese ion binding"/>
    <property type="evidence" value="ECO:0007669"/>
    <property type="project" value="UniProtKB-UniRule"/>
</dbReference>
<dbReference type="GO" id="GO:0008758">
    <property type="term" value="F:UDP-2,3-diacylglucosamine hydrolase activity"/>
    <property type="evidence" value="ECO:0007669"/>
    <property type="project" value="UniProtKB-UniRule"/>
</dbReference>
<dbReference type="GO" id="GO:0009245">
    <property type="term" value="P:lipid A biosynthetic process"/>
    <property type="evidence" value="ECO:0007669"/>
    <property type="project" value="UniProtKB-UniRule"/>
</dbReference>
<dbReference type="CDD" id="cd07398">
    <property type="entry name" value="MPP_YbbF-LpxH"/>
    <property type="match status" value="1"/>
</dbReference>
<dbReference type="Gene3D" id="3.60.21.10">
    <property type="match status" value="1"/>
</dbReference>
<dbReference type="HAMAP" id="MF_00575">
    <property type="entry name" value="LpxH"/>
    <property type="match status" value="1"/>
</dbReference>
<dbReference type="InterPro" id="IPR004843">
    <property type="entry name" value="Calcineurin-like_PHP_ApaH"/>
</dbReference>
<dbReference type="InterPro" id="IPR043461">
    <property type="entry name" value="LpxH-like"/>
</dbReference>
<dbReference type="InterPro" id="IPR029052">
    <property type="entry name" value="Metallo-depent_PP-like"/>
</dbReference>
<dbReference type="InterPro" id="IPR010138">
    <property type="entry name" value="UDP-diacylglucosamine_Hdrlase"/>
</dbReference>
<dbReference type="NCBIfam" id="TIGR01854">
    <property type="entry name" value="lipid_A_lpxH"/>
    <property type="match status" value="1"/>
</dbReference>
<dbReference type="NCBIfam" id="NF003743">
    <property type="entry name" value="PRK05340.1"/>
    <property type="match status" value="1"/>
</dbReference>
<dbReference type="PANTHER" id="PTHR34990:SF1">
    <property type="entry name" value="UDP-2,3-DIACYLGLUCOSAMINE HYDROLASE"/>
    <property type="match status" value="1"/>
</dbReference>
<dbReference type="PANTHER" id="PTHR34990">
    <property type="entry name" value="UDP-2,3-DIACYLGLUCOSAMINE HYDROLASE-RELATED"/>
    <property type="match status" value="1"/>
</dbReference>
<dbReference type="Pfam" id="PF00149">
    <property type="entry name" value="Metallophos"/>
    <property type="match status" value="1"/>
</dbReference>
<dbReference type="SUPFAM" id="SSF56300">
    <property type="entry name" value="Metallo-dependent phosphatases"/>
    <property type="match status" value="1"/>
</dbReference>
<accession>B2FQP4</accession>
<keyword id="KW-0997">Cell inner membrane</keyword>
<keyword id="KW-1003">Cell membrane</keyword>
<keyword id="KW-0378">Hydrolase</keyword>
<keyword id="KW-0441">Lipid A biosynthesis</keyword>
<keyword id="KW-0444">Lipid biosynthesis</keyword>
<keyword id="KW-0443">Lipid metabolism</keyword>
<keyword id="KW-0464">Manganese</keyword>
<keyword id="KW-0472">Membrane</keyword>
<keyword id="KW-0479">Metal-binding</keyword>
<keyword id="KW-1185">Reference proteome</keyword>
<reference key="1">
    <citation type="journal article" date="2008" name="Genome Biol.">
        <title>The complete genome, comparative and functional analysis of Stenotrophomonas maltophilia reveals an organism heavily shielded by drug resistance determinants.</title>
        <authorList>
            <person name="Crossman L.C."/>
            <person name="Gould V.C."/>
            <person name="Dow J.M."/>
            <person name="Vernikos G.S."/>
            <person name="Okazaki A."/>
            <person name="Sebaihia M."/>
            <person name="Saunders D."/>
            <person name="Arrowsmith C."/>
            <person name="Carver T."/>
            <person name="Peters N."/>
            <person name="Adlem E."/>
            <person name="Kerhornou A."/>
            <person name="Lord A."/>
            <person name="Murphy L."/>
            <person name="Seeger K."/>
            <person name="Squares R."/>
            <person name="Rutter S."/>
            <person name="Quail M.A."/>
            <person name="Rajandream M.A."/>
            <person name="Harris D."/>
            <person name="Churcher C."/>
            <person name="Bentley S.D."/>
            <person name="Parkhill J."/>
            <person name="Thomson N.R."/>
            <person name="Avison M.B."/>
        </authorList>
    </citation>
    <scope>NUCLEOTIDE SEQUENCE [LARGE SCALE GENOMIC DNA]</scope>
    <source>
        <strain>K279a</strain>
    </source>
</reference>
<proteinExistence type="inferred from homology"/>
<comment type="function">
    <text evidence="1">Hydrolyzes the pyrophosphate bond of UDP-2,3-diacylglucosamine to yield 2,3-diacylglucosamine 1-phosphate (lipid X) and UMP by catalyzing the attack of water at the alpha-P atom. Involved in the biosynthesis of lipid A, a phosphorylated glycolipid that anchors the lipopolysaccharide to the outer membrane of the cell.</text>
</comment>
<comment type="catalytic activity">
    <reaction evidence="1">
        <text>UDP-2-N,3-O-bis[(3R)-3-hydroxytetradecanoyl]-alpha-D-glucosamine + H2O = 2-N,3-O-bis[(3R)-3-hydroxytetradecanoyl]-alpha-D-glucosaminyl 1-phosphate + UMP + 2 H(+)</text>
        <dbReference type="Rhea" id="RHEA:25213"/>
        <dbReference type="ChEBI" id="CHEBI:15377"/>
        <dbReference type="ChEBI" id="CHEBI:15378"/>
        <dbReference type="ChEBI" id="CHEBI:57865"/>
        <dbReference type="ChEBI" id="CHEBI:57957"/>
        <dbReference type="ChEBI" id="CHEBI:78847"/>
        <dbReference type="EC" id="3.6.1.54"/>
    </reaction>
</comment>
<comment type="cofactor">
    <cofactor evidence="1">
        <name>Mn(2+)</name>
        <dbReference type="ChEBI" id="CHEBI:29035"/>
    </cofactor>
    <text evidence="1">Binds 2 Mn(2+) ions per subunit in a binuclear metal center.</text>
</comment>
<comment type="pathway">
    <text evidence="1">Glycolipid biosynthesis; lipid IV(A) biosynthesis; lipid IV(A) from (3R)-3-hydroxytetradecanoyl-[acyl-carrier-protein] and UDP-N-acetyl-alpha-D-glucosamine: step 4/6.</text>
</comment>
<comment type="subcellular location">
    <subcellularLocation>
        <location evidence="1">Cell inner membrane</location>
        <topology evidence="1">Peripheral membrane protein</topology>
        <orientation evidence="1">Cytoplasmic side</orientation>
    </subcellularLocation>
</comment>
<comment type="similarity">
    <text evidence="1">Belongs to the LpxH family.</text>
</comment>
<organism>
    <name type="scientific">Stenotrophomonas maltophilia (strain K279a)</name>
    <dbReference type="NCBI Taxonomy" id="522373"/>
    <lineage>
        <taxon>Bacteria</taxon>
        <taxon>Pseudomonadati</taxon>
        <taxon>Pseudomonadota</taxon>
        <taxon>Gammaproteobacteria</taxon>
        <taxon>Lysobacterales</taxon>
        <taxon>Lysobacteraceae</taxon>
        <taxon>Stenotrophomonas</taxon>
        <taxon>Stenotrophomonas maltophilia group</taxon>
    </lineage>
</organism>
<protein>
    <recommendedName>
        <fullName evidence="1">UDP-2,3-diacylglucosamine hydrolase</fullName>
        <ecNumber evidence="1">3.6.1.54</ecNumber>
    </recommendedName>
    <alternativeName>
        <fullName evidence="1">UDP-2,3-diacylglucosamine diphosphatase</fullName>
    </alternativeName>
</protein>
<sequence>MTTLFISDLHLDPSRPEITDLFLRFLREQAPGADALYILGDLFEAWIGDDTPSPAADAVADALKVLSDSGVPVYFIRGNRDFLLGEDYARRAGLRILPDPCMIDLYGRPVLLQHGDLLCTDDIPYQQFRAQTRDPAFQAQFLSQPLAARIAFAQKAREASQARQSEMKQGDRAQFETVTDVAPSEVDATFARHGVDTMIHGHTHRPAIHSLQAGGRACTRIVLGDWYEQGSVLRVDAGGWSLDTLARE</sequence>
<feature type="chain" id="PRO_1000129541" description="UDP-2,3-diacylglucosamine hydrolase">
    <location>
        <begin position="1"/>
        <end position="248"/>
    </location>
</feature>
<feature type="binding site" evidence="1">
    <location>
        <position position="8"/>
    </location>
    <ligand>
        <name>Mn(2+)</name>
        <dbReference type="ChEBI" id="CHEBI:29035"/>
        <label>1</label>
    </ligand>
</feature>
<feature type="binding site" evidence="1">
    <location>
        <position position="10"/>
    </location>
    <ligand>
        <name>Mn(2+)</name>
        <dbReference type="ChEBI" id="CHEBI:29035"/>
        <label>1</label>
    </ligand>
</feature>
<feature type="binding site" evidence="1">
    <location>
        <position position="41"/>
    </location>
    <ligand>
        <name>Mn(2+)</name>
        <dbReference type="ChEBI" id="CHEBI:29035"/>
        <label>1</label>
    </ligand>
</feature>
<feature type="binding site" evidence="1">
    <location>
        <position position="41"/>
    </location>
    <ligand>
        <name>Mn(2+)</name>
        <dbReference type="ChEBI" id="CHEBI:29035"/>
        <label>2</label>
    </ligand>
</feature>
<feature type="binding site" evidence="1">
    <location>
        <begin position="79"/>
        <end position="80"/>
    </location>
    <ligand>
        <name>substrate</name>
    </ligand>
</feature>
<feature type="binding site" evidence="1">
    <location>
        <position position="79"/>
    </location>
    <ligand>
        <name>Mn(2+)</name>
        <dbReference type="ChEBI" id="CHEBI:29035"/>
        <label>2</label>
    </ligand>
</feature>
<feature type="binding site" evidence="1">
    <location>
        <position position="114"/>
    </location>
    <ligand>
        <name>Mn(2+)</name>
        <dbReference type="ChEBI" id="CHEBI:29035"/>
        <label>2</label>
    </ligand>
</feature>
<feature type="binding site" evidence="1">
    <location>
        <position position="122"/>
    </location>
    <ligand>
        <name>substrate</name>
    </ligand>
</feature>
<feature type="binding site" evidence="1">
    <location>
        <position position="160"/>
    </location>
    <ligand>
        <name>substrate</name>
    </ligand>
</feature>
<feature type="binding site" evidence="1">
    <location>
        <position position="171"/>
    </location>
    <ligand>
        <name>substrate</name>
    </ligand>
</feature>
<feature type="binding site" evidence="1">
    <location>
        <position position="174"/>
    </location>
    <ligand>
        <name>substrate</name>
    </ligand>
</feature>
<feature type="binding site" evidence="1">
    <location>
        <position position="202"/>
    </location>
    <ligand>
        <name>Mn(2+)</name>
        <dbReference type="ChEBI" id="CHEBI:29035"/>
        <label>2</label>
    </ligand>
</feature>
<feature type="binding site" evidence="1">
    <location>
        <position position="202"/>
    </location>
    <ligand>
        <name>substrate</name>
    </ligand>
</feature>
<feature type="binding site" evidence="1">
    <location>
        <position position="204"/>
    </location>
    <ligand>
        <name>Mn(2+)</name>
        <dbReference type="ChEBI" id="CHEBI:29035"/>
        <label>1</label>
    </ligand>
</feature>
<name>LPXH_STRMK</name>
<evidence type="ECO:0000255" key="1">
    <source>
        <dbReference type="HAMAP-Rule" id="MF_00575"/>
    </source>
</evidence>